<keyword id="KW-0021">Allosteric enzyme</keyword>
<keyword id="KW-0067">ATP-binding</keyword>
<keyword id="KW-0963">Cytoplasm</keyword>
<keyword id="KW-0324">Glycolysis</keyword>
<keyword id="KW-0418">Kinase</keyword>
<keyword id="KW-0460">Magnesium</keyword>
<keyword id="KW-0479">Metal-binding</keyword>
<keyword id="KW-0547">Nucleotide-binding</keyword>
<keyword id="KW-0808">Transferase</keyword>
<accession>B8D996</accession>
<name>PFKA_BUCA5</name>
<proteinExistence type="inferred from homology"/>
<organism>
    <name type="scientific">Buchnera aphidicola subsp. Acyrthosiphon pisum (strain 5A)</name>
    <dbReference type="NCBI Taxonomy" id="563178"/>
    <lineage>
        <taxon>Bacteria</taxon>
        <taxon>Pseudomonadati</taxon>
        <taxon>Pseudomonadota</taxon>
        <taxon>Gammaproteobacteria</taxon>
        <taxon>Enterobacterales</taxon>
        <taxon>Erwiniaceae</taxon>
        <taxon>Buchnera</taxon>
    </lineage>
</organism>
<feature type="chain" id="PRO_1000192365" description="ATP-dependent 6-phosphofructokinase">
    <location>
        <begin position="1"/>
        <end position="320"/>
    </location>
</feature>
<feature type="active site" description="Proton acceptor" evidence="1">
    <location>
        <position position="128"/>
    </location>
</feature>
<feature type="binding site" evidence="1">
    <location>
        <position position="12"/>
    </location>
    <ligand>
        <name>ATP</name>
        <dbReference type="ChEBI" id="CHEBI:30616"/>
    </ligand>
</feature>
<feature type="binding site" evidence="1">
    <location>
        <begin position="22"/>
        <end position="26"/>
    </location>
    <ligand>
        <name>ADP</name>
        <dbReference type="ChEBI" id="CHEBI:456216"/>
        <note>allosteric activator; ligand shared between dimeric partners</note>
    </ligand>
</feature>
<feature type="binding site" evidence="1">
    <location>
        <begin position="55"/>
        <end position="60"/>
    </location>
    <ligand>
        <name>ADP</name>
        <dbReference type="ChEBI" id="CHEBI:456216"/>
        <note>allosteric activator; ligand shared between dimeric partners</note>
    </ligand>
</feature>
<feature type="binding site" evidence="1">
    <location>
        <begin position="73"/>
        <end position="74"/>
    </location>
    <ligand>
        <name>ATP</name>
        <dbReference type="ChEBI" id="CHEBI:30616"/>
    </ligand>
</feature>
<feature type="binding site" evidence="1">
    <location>
        <begin position="103"/>
        <end position="106"/>
    </location>
    <ligand>
        <name>ATP</name>
        <dbReference type="ChEBI" id="CHEBI:30616"/>
    </ligand>
</feature>
<feature type="binding site" evidence="1">
    <location>
        <position position="104"/>
    </location>
    <ligand>
        <name>Mg(2+)</name>
        <dbReference type="ChEBI" id="CHEBI:18420"/>
        <note>catalytic</note>
    </ligand>
</feature>
<feature type="binding site" description="in other chain" evidence="1">
    <location>
        <begin position="126"/>
        <end position="128"/>
    </location>
    <ligand>
        <name>substrate</name>
        <note>ligand shared between dimeric partners</note>
    </ligand>
</feature>
<feature type="binding site" description="in other chain" evidence="1">
    <location>
        <position position="155"/>
    </location>
    <ligand>
        <name>ADP</name>
        <dbReference type="ChEBI" id="CHEBI:456216"/>
        <note>allosteric activator; ligand shared between dimeric partners</note>
    </ligand>
</feature>
<feature type="binding site" evidence="1">
    <location>
        <position position="163"/>
    </location>
    <ligand>
        <name>substrate</name>
        <note>ligand shared between dimeric partners</note>
    </ligand>
</feature>
<feature type="binding site" description="in other chain" evidence="1">
    <location>
        <begin position="170"/>
        <end position="172"/>
    </location>
    <ligand>
        <name>substrate</name>
        <note>ligand shared between dimeric partners</note>
    </ligand>
</feature>
<feature type="binding site" description="in other chain" evidence="1">
    <location>
        <begin position="186"/>
        <end position="188"/>
    </location>
    <ligand>
        <name>ADP</name>
        <dbReference type="ChEBI" id="CHEBI:456216"/>
        <note>allosteric activator; ligand shared between dimeric partners</note>
    </ligand>
</feature>
<feature type="binding site" description="in other chain" evidence="1">
    <location>
        <position position="212"/>
    </location>
    <ligand>
        <name>ADP</name>
        <dbReference type="ChEBI" id="CHEBI:456216"/>
        <note>allosteric activator; ligand shared between dimeric partners</note>
    </ligand>
</feature>
<feature type="binding site" description="in other chain" evidence="1">
    <location>
        <begin position="214"/>
        <end position="216"/>
    </location>
    <ligand>
        <name>ADP</name>
        <dbReference type="ChEBI" id="CHEBI:456216"/>
        <note>allosteric activator; ligand shared between dimeric partners</note>
    </ligand>
</feature>
<feature type="binding site" description="in other chain" evidence="1">
    <location>
        <position position="223"/>
    </location>
    <ligand>
        <name>substrate</name>
        <note>ligand shared between dimeric partners</note>
    </ligand>
</feature>
<feature type="binding site" evidence="1">
    <location>
        <position position="244"/>
    </location>
    <ligand>
        <name>substrate</name>
        <note>ligand shared between dimeric partners</note>
    </ligand>
</feature>
<feature type="binding site" description="in other chain" evidence="1">
    <location>
        <begin position="250"/>
        <end position="253"/>
    </location>
    <ligand>
        <name>substrate</name>
        <note>ligand shared between dimeric partners</note>
    </ligand>
</feature>
<sequence>MIKKIGVLTSGGDAPGMNAAIRGVVRTALSERLEVFGIYDGYLGLYENRMVQLDRYSVSDMINRGGTFLGSARFASFYQDKIRSIAVQNIKKRKIDALVVIGGDGSYIGAQKLTEMGIPCISIPGTIDNDVSGTDYTIGYFTALQTVVEAIDRLRDTSSSHQRISIVEVMGRHCGDLTLAAAIAGGCEFIVLPEIDYKKEDLVIEIQAGIAKGKKHAIVAITEYICDVEELAQYIEKKTNRETRATILGHIQRGGAPVVYDRILASRMGAYSVELLIKGYQGKCVGIQNEKMVFNDIKNALKNMKRTFKKDWLITAKKLY</sequence>
<evidence type="ECO:0000255" key="1">
    <source>
        <dbReference type="HAMAP-Rule" id="MF_00339"/>
    </source>
</evidence>
<comment type="function">
    <text evidence="1">Catalyzes the phosphorylation of D-fructose 6-phosphate to fructose 1,6-bisphosphate by ATP, the first committing step of glycolysis.</text>
</comment>
<comment type="catalytic activity">
    <reaction evidence="1">
        <text>beta-D-fructose 6-phosphate + ATP = beta-D-fructose 1,6-bisphosphate + ADP + H(+)</text>
        <dbReference type="Rhea" id="RHEA:16109"/>
        <dbReference type="ChEBI" id="CHEBI:15378"/>
        <dbReference type="ChEBI" id="CHEBI:30616"/>
        <dbReference type="ChEBI" id="CHEBI:32966"/>
        <dbReference type="ChEBI" id="CHEBI:57634"/>
        <dbReference type="ChEBI" id="CHEBI:456216"/>
        <dbReference type="EC" id="2.7.1.11"/>
    </reaction>
</comment>
<comment type="cofactor">
    <cofactor evidence="1">
        <name>Mg(2+)</name>
        <dbReference type="ChEBI" id="CHEBI:18420"/>
    </cofactor>
</comment>
<comment type="activity regulation">
    <text evidence="1">Allosterically activated by ADP and other diphosphonucleosides, and allosterically inhibited by phosphoenolpyruvate.</text>
</comment>
<comment type="pathway">
    <text evidence="1">Carbohydrate degradation; glycolysis; D-glyceraldehyde 3-phosphate and glycerone phosphate from D-glucose: step 3/4.</text>
</comment>
<comment type="subunit">
    <text evidence="1">Homotetramer.</text>
</comment>
<comment type="subcellular location">
    <subcellularLocation>
        <location evidence="1">Cytoplasm</location>
    </subcellularLocation>
</comment>
<comment type="similarity">
    <text evidence="1">Belongs to the phosphofructokinase type A (PFKA) family. ATP-dependent PFK group I subfamily. Prokaryotic clade 'B1' sub-subfamily.</text>
</comment>
<dbReference type="EC" id="2.7.1.11" evidence="1"/>
<dbReference type="EMBL" id="CP001161">
    <property type="protein sequence ID" value="ACL30667.1"/>
    <property type="molecule type" value="Genomic_DNA"/>
</dbReference>
<dbReference type="RefSeq" id="WP_009874258.1">
    <property type="nucleotide sequence ID" value="NC_011833.1"/>
</dbReference>
<dbReference type="SMR" id="B8D996"/>
<dbReference type="KEGG" id="bap:BUAP5A_299"/>
<dbReference type="HOGENOM" id="CLU_020655_0_1_6"/>
<dbReference type="OrthoDB" id="9802503at2"/>
<dbReference type="UniPathway" id="UPA00109">
    <property type="reaction ID" value="UER00182"/>
</dbReference>
<dbReference type="Proteomes" id="UP000006904">
    <property type="component" value="Chromosome"/>
</dbReference>
<dbReference type="GO" id="GO:0005945">
    <property type="term" value="C:6-phosphofructokinase complex"/>
    <property type="evidence" value="ECO:0007669"/>
    <property type="project" value="TreeGrafter"/>
</dbReference>
<dbReference type="GO" id="GO:0003872">
    <property type="term" value="F:6-phosphofructokinase activity"/>
    <property type="evidence" value="ECO:0007669"/>
    <property type="project" value="UniProtKB-UniRule"/>
</dbReference>
<dbReference type="GO" id="GO:0016208">
    <property type="term" value="F:AMP binding"/>
    <property type="evidence" value="ECO:0007669"/>
    <property type="project" value="TreeGrafter"/>
</dbReference>
<dbReference type="GO" id="GO:0005524">
    <property type="term" value="F:ATP binding"/>
    <property type="evidence" value="ECO:0007669"/>
    <property type="project" value="UniProtKB-KW"/>
</dbReference>
<dbReference type="GO" id="GO:0070095">
    <property type="term" value="F:fructose-6-phosphate binding"/>
    <property type="evidence" value="ECO:0007669"/>
    <property type="project" value="TreeGrafter"/>
</dbReference>
<dbReference type="GO" id="GO:0042802">
    <property type="term" value="F:identical protein binding"/>
    <property type="evidence" value="ECO:0007669"/>
    <property type="project" value="TreeGrafter"/>
</dbReference>
<dbReference type="GO" id="GO:0046872">
    <property type="term" value="F:metal ion binding"/>
    <property type="evidence" value="ECO:0007669"/>
    <property type="project" value="UniProtKB-KW"/>
</dbReference>
<dbReference type="GO" id="GO:0048029">
    <property type="term" value="F:monosaccharide binding"/>
    <property type="evidence" value="ECO:0007669"/>
    <property type="project" value="TreeGrafter"/>
</dbReference>
<dbReference type="GO" id="GO:0061621">
    <property type="term" value="P:canonical glycolysis"/>
    <property type="evidence" value="ECO:0007669"/>
    <property type="project" value="TreeGrafter"/>
</dbReference>
<dbReference type="GO" id="GO:0030388">
    <property type="term" value="P:fructose 1,6-bisphosphate metabolic process"/>
    <property type="evidence" value="ECO:0007669"/>
    <property type="project" value="TreeGrafter"/>
</dbReference>
<dbReference type="GO" id="GO:0006002">
    <property type="term" value="P:fructose 6-phosphate metabolic process"/>
    <property type="evidence" value="ECO:0007669"/>
    <property type="project" value="InterPro"/>
</dbReference>
<dbReference type="CDD" id="cd00763">
    <property type="entry name" value="Bacterial_PFK"/>
    <property type="match status" value="1"/>
</dbReference>
<dbReference type="FunFam" id="3.40.50.450:FF:000001">
    <property type="entry name" value="ATP-dependent 6-phosphofructokinase"/>
    <property type="match status" value="1"/>
</dbReference>
<dbReference type="FunFam" id="3.40.50.460:FF:000002">
    <property type="entry name" value="ATP-dependent 6-phosphofructokinase"/>
    <property type="match status" value="1"/>
</dbReference>
<dbReference type="Gene3D" id="3.40.50.450">
    <property type="match status" value="1"/>
</dbReference>
<dbReference type="Gene3D" id="3.40.50.460">
    <property type="entry name" value="Phosphofructokinase domain"/>
    <property type="match status" value="1"/>
</dbReference>
<dbReference type="HAMAP" id="MF_00339">
    <property type="entry name" value="Phosphofructokinase_I_B1"/>
    <property type="match status" value="1"/>
</dbReference>
<dbReference type="InterPro" id="IPR022953">
    <property type="entry name" value="ATP_PFK"/>
</dbReference>
<dbReference type="InterPro" id="IPR012003">
    <property type="entry name" value="ATP_PFK_prok-type"/>
</dbReference>
<dbReference type="InterPro" id="IPR012828">
    <property type="entry name" value="PFKA_ATP_prok"/>
</dbReference>
<dbReference type="InterPro" id="IPR015912">
    <property type="entry name" value="Phosphofructokinase_CS"/>
</dbReference>
<dbReference type="InterPro" id="IPR000023">
    <property type="entry name" value="Phosphofructokinase_dom"/>
</dbReference>
<dbReference type="InterPro" id="IPR035966">
    <property type="entry name" value="PKF_sf"/>
</dbReference>
<dbReference type="NCBIfam" id="TIGR02482">
    <property type="entry name" value="PFKA_ATP"/>
    <property type="match status" value="1"/>
</dbReference>
<dbReference type="NCBIfam" id="NF002872">
    <property type="entry name" value="PRK03202.1"/>
    <property type="match status" value="1"/>
</dbReference>
<dbReference type="PANTHER" id="PTHR13697:SF4">
    <property type="entry name" value="ATP-DEPENDENT 6-PHOSPHOFRUCTOKINASE"/>
    <property type="match status" value="1"/>
</dbReference>
<dbReference type="PANTHER" id="PTHR13697">
    <property type="entry name" value="PHOSPHOFRUCTOKINASE"/>
    <property type="match status" value="1"/>
</dbReference>
<dbReference type="Pfam" id="PF00365">
    <property type="entry name" value="PFK"/>
    <property type="match status" value="1"/>
</dbReference>
<dbReference type="PIRSF" id="PIRSF000532">
    <property type="entry name" value="ATP_PFK_prok"/>
    <property type="match status" value="1"/>
</dbReference>
<dbReference type="PRINTS" id="PR00476">
    <property type="entry name" value="PHFRCTKINASE"/>
</dbReference>
<dbReference type="SUPFAM" id="SSF53784">
    <property type="entry name" value="Phosphofructokinase"/>
    <property type="match status" value="1"/>
</dbReference>
<dbReference type="PROSITE" id="PS00433">
    <property type="entry name" value="PHOSPHOFRUCTOKINASE"/>
    <property type="match status" value="1"/>
</dbReference>
<reference key="1">
    <citation type="journal article" date="2009" name="Science">
        <title>The dynamics and time scale of ongoing genomic erosion in symbiotic bacteria.</title>
        <authorList>
            <person name="Moran N.A."/>
            <person name="McLaughlin H.J."/>
            <person name="Sorek R."/>
        </authorList>
    </citation>
    <scope>NUCLEOTIDE SEQUENCE [LARGE SCALE GENOMIC DNA]</scope>
    <source>
        <strain>5A</strain>
    </source>
</reference>
<gene>
    <name evidence="1" type="primary">pfkA</name>
    <name type="ordered locus">BUAP5A_299</name>
</gene>
<protein>
    <recommendedName>
        <fullName evidence="1">ATP-dependent 6-phosphofructokinase</fullName>
        <shortName evidence="1">ATP-PFK</shortName>
        <shortName evidence="1">Phosphofructokinase</shortName>
        <ecNumber evidence="1">2.7.1.11</ecNumber>
    </recommendedName>
    <alternativeName>
        <fullName evidence="1">Phosphohexokinase</fullName>
    </alternativeName>
</protein>